<dbReference type="EMBL" id="CP000155">
    <property type="protein sequence ID" value="ABC32839.1"/>
    <property type="molecule type" value="Genomic_DNA"/>
</dbReference>
<dbReference type="RefSeq" id="WP_011399897.1">
    <property type="nucleotide sequence ID" value="NC_007645.1"/>
</dbReference>
<dbReference type="SMR" id="Q2S935"/>
<dbReference type="STRING" id="349521.HCH_06195"/>
<dbReference type="KEGG" id="hch:HCH_06195"/>
<dbReference type="eggNOG" id="COG0100">
    <property type="taxonomic scope" value="Bacteria"/>
</dbReference>
<dbReference type="HOGENOM" id="CLU_072439_5_0_6"/>
<dbReference type="OrthoDB" id="9806415at2"/>
<dbReference type="Proteomes" id="UP000000238">
    <property type="component" value="Chromosome"/>
</dbReference>
<dbReference type="GO" id="GO:1990904">
    <property type="term" value="C:ribonucleoprotein complex"/>
    <property type="evidence" value="ECO:0007669"/>
    <property type="project" value="UniProtKB-KW"/>
</dbReference>
<dbReference type="GO" id="GO:0005840">
    <property type="term" value="C:ribosome"/>
    <property type="evidence" value="ECO:0007669"/>
    <property type="project" value="UniProtKB-KW"/>
</dbReference>
<dbReference type="GO" id="GO:0019843">
    <property type="term" value="F:rRNA binding"/>
    <property type="evidence" value="ECO:0007669"/>
    <property type="project" value="UniProtKB-UniRule"/>
</dbReference>
<dbReference type="GO" id="GO:0003735">
    <property type="term" value="F:structural constituent of ribosome"/>
    <property type="evidence" value="ECO:0007669"/>
    <property type="project" value="InterPro"/>
</dbReference>
<dbReference type="GO" id="GO:0006412">
    <property type="term" value="P:translation"/>
    <property type="evidence" value="ECO:0007669"/>
    <property type="project" value="UniProtKB-UniRule"/>
</dbReference>
<dbReference type="FunFam" id="3.30.420.80:FF:000001">
    <property type="entry name" value="30S ribosomal protein S11"/>
    <property type="match status" value="1"/>
</dbReference>
<dbReference type="Gene3D" id="3.30.420.80">
    <property type="entry name" value="Ribosomal protein S11"/>
    <property type="match status" value="1"/>
</dbReference>
<dbReference type="HAMAP" id="MF_01310">
    <property type="entry name" value="Ribosomal_uS11"/>
    <property type="match status" value="1"/>
</dbReference>
<dbReference type="InterPro" id="IPR001971">
    <property type="entry name" value="Ribosomal_uS11"/>
</dbReference>
<dbReference type="InterPro" id="IPR019981">
    <property type="entry name" value="Ribosomal_uS11_bac-type"/>
</dbReference>
<dbReference type="InterPro" id="IPR018102">
    <property type="entry name" value="Ribosomal_uS11_CS"/>
</dbReference>
<dbReference type="InterPro" id="IPR036967">
    <property type="entry name" value="Ribosomal_uS11_sf"/>
</dbReference>
<dbReference type="NCBIfam" id="NF003698">
    <property type="entry name" value="PRK05309.1"/>
    <property type="match status" value="1"/>
</dbReference>
<dbReference type="NCBIfam" id="TIGR03632">
    <property type="entry name" value="uS11_bact"/>
    <property type="match status" value="1"/>
</dbReference>
<dbReference type="PANTHER" id="PTHR11759">
    <property type="entry name" value="40S RIBOSOMAL PROTEIN S14/30S RIBOSOMAL PROTEIN S11"/>
    <property type="match status" value="1"/>
</dbReference>
<dbReference type="Pfam" id="PF00411">
    <property type="entry name" value="Ribosomal_S11"/>
    <property type="match status" value="1"/>
</dbReference>
<dbReference type="PIRSF" id="PIRSF002131">
    <property type="entry name" value="Ribosomal_S11"/>
    <property type="match status" value="1"/>
</dbReference>
<dbReference type="SUPFAM" id="SSF53137">
    <property type="entry name" value="Translational machinery components"/>
    <property type="match status" value="1"/>
</dbReference>
<dbReference type="PROSITE" id="PS00054">
    <property type="entry name" value="RIBOSOMAL_S11"/>
    <property type="match status" value="1"/>
</dbReference>
<reference key="1">
    <citation type="journal article" date="2005" name="Nucleic Acids Res.">
        <title>Genomic blueprint of Hahella chejuensis, a marine microbe producing an algicidal agent.</title>
        <authorList>
            <person name="Jeong H."/>
            <person name="Yim J.H."/>
            <person name="Lee C."/>
            <person name="Choi S.-H."/>
            <person name="Park Y.K."/>
            <person name="Yoon S.H."/>
            <person name="Hur C.-G."/>
            <person name="Kang H.-Y."/>
            <person name="Kim D."/>
            <person name="Lee H.H."/>
            <person name="Park K.H."/>
            <person name="Park S.-H."/>
            <person name="Park H.-S."/>
            <person name="Lee H.K."/>
            <person name="Oh T.K."/>
            <person name="Kim J.F."/>
        </authorList>
    </citation>
    <scope>NUCLEOTIDE SEQUENCE [LARGE SCALE GENOMIC DNA]</scope>
    <source>
        <strain>KCTC 2396</strain>
    </source>
</reference>
<name>RS11_HAHCH</name>
<accession>Q2S935</accession>
<proteinExistence type="inferred from homology"/>
<protein>
    <recommendedName>
        <fullName evidence="1">Small ribosomal subunit protein uS11</fullName>
    </recommendedName>
    <alternativeName>
        <fullName evidence="2">30S ribosomal protein S11</fullName>
    </alternativeName>
</protein>
<sequence>MAKPGTRTRKKVKKTVVDGVAHIHASFNNTIVTITDRQGNALSWATSGGSGFRGSRKSTPFAAQVAAERAGNAAAEYGLKNLDVLVKGPGPGRESAIRALNACGYKITNITDVTPIPHNGCRPPKKRRV</sequence>
<gene>
    <name evidence="1" type="primary">rpsK</name>
    <name type="ordered locus">HCH_06195</name>
</gene>
<keyword id="KW-1185">Reference proteome</keyword>
<keyword id="KW-0687">Ribonucleoprotein</keyword>
<keyword id="KW-0689">Ribosomal protein</keyword>
<keyword id="KW-0694">RNA-binding</keyword>
<keyword id="KW-0699">rRNA-binding</keyword>
<comment type="function">
    <text evidence="1">Located on the platform of the 30S subunit, it bridges several disparate RNA helices of the 16S rRNA. Forms part of the Shine-Dalgarno cleft in the 70S ribosome.</text>
</comment>
<comment type="subunit">
    <text evidence="1">Part of the 30S ribosomal subunit. Interacts with proteins S7 and S18. Binds to IF-3.</text>
</comment>
<comment type="similarity">
    <text evidence="1">Belongs to the universal ribosomal protein uS11 family.</text>
</comment>
<evidence type="ECO:0000255" key="1">
    <source>
        <dbReference type="HAMAP-Rule" id="MF_01310"/>
    </source>
</evidence>
<evidence type="ECO:0000305" key="2"/>
<feature type="chain" id="PRO_0000294767" description="Small ribosomal subunit protein uS11">
    <location>
        <begin position="1"/>
        <end position="129"/>
    </location>
</feature>
<organism>
    <name type="scientific">Hahella chejuensis (strain KCTC 2396)</name>
    <dbReference type="NCBI Taxonomy" id="349521"/>
    <lineage>
        <taxon>Bacteria</taxon>
        <taxon>Pseudomonadati</taxon>
        <taxon>Pseudomonadota</taxon>
        <taxon>Gammaproteobacteria</taxon>
        <taxon>Oceanospirillales</taxon>
        <taxon>Hahellaceae</taxon>
        <taxon>Hahella</taxon>
    </lineage>
</organism>